<name>BTPS1_METBS</name>
<dbReference type="EC" id="4.2.3.163" evidence="2"/>
<dbReference type="EC" id="4.2.3.171" evidence="2"/>
<dbReference type="EMBL" id="AZNG01000036">
    <property type="protein sequence ID" value="KID60519.1"/>
    <property type="molecule type" value="Genomic_DNA"/>
</dbReference>
<dbReference type="RefSeq" id="XP_014539580.1">
    <property type="nucleotide sequence ID" value="XM_014684094.1"/>
</dbReference>
<dbReference type="SMR" id="A0A0B4FWC3"/>
<dbReference type="GeneID" id="26247663"/>
<dbReference type="KEGG" id="mbrn:26247663"/>
<dbReference type="HOGENOM" id="CLU_042538_4_2_1"/>
<dbReference type="OrthoDB" id="4040at5529"/>
<dbReference type="GO" id="GO:0046872">
    <property type="term" value="F:metal ion binding"/>
    <property type="evidence" value="ECO:0007669"/>
    <property type="project" value="UniProtKB-KW"/>
</dbReference>
<dbReference type="GO" id="GO:0010333">
    <property type="term" value="F:terpene synthase activity"/>
    <property type="evidence" value="ECO:0007669"/>
    <property type="project" value="InterPro"/>
</dbReference>
<dbReference type="GO" id="GO:0008299">
    <property type="term" value="P:isoprenoid biosynthetic process"/>
    <property type="evidence" value="ECO:0007669"/>
    <property type="project" value="UniProtKB-ARBA"/>
</dbReference>
<dbReference type="Gene3D" id="1.10.600.10">
    <property type="entry name" value="Farnesyl Diphosphate Synthase"/>
    <property type="match status" value="1"/>
</dbReference>
<dbReference type="InterPro" id="IPR008949">
    <property type="entry name" value="Isoprenoid_synthase_dom_sf"/>
</dbReference>
<dbReference type="InterPro" id="IPR034686">
    <property type="entry name" value="Terpene_cyclase-like_2"/>
</dbReference>
<dbReference type="PANTHER" id="PTHR35201:SF4">
    <property type="entry name" value="BETA-PINACENE SYNTHASE-RELATED"/>
    <property type="match status" value="1"/>
</dbReference>
<dbReference type="PANTHER" id="PTHR35201">
    <property type="entry name" value="TERPENE SYNTHASE"/>
    <property type="match status" value="1"/>
</dbReference>
<dbReference type="Pfam" id="PF19086">
    <property type="entry name" value="Terpene_syn_C_2"/>
    <property type="match status" value="1"/>
</dbReference>
<dbReference type="SFLD" id="SFLDS00005">
    <property type="entry name" value="Isoprenoid_Synthase_Type_I"/>
    <property type="match status" value="1"/>
</dbReference>
<dbReference type="SFLD" id="SFLDG01020">
    <property type="entry name" value="Terpene_Cyclase_Like_2"/>
    <property type="match status" value="1"/>
</dbReference>
<dbReference type="SUPFAM" id="SSF48576">
    <property type="entry name" value="Terpenoid synthases"/>
    <property type="match status" value="1"/>
</dbReference>
<sequence length="332" mass="37835">MEKQRLTAQLSSLRVPLFSVPWPGQCSNKAEVIEARMMKWADEHNLLVTDEYRNRVIRTRYGLLAARCYPNAGEELLQAIADCLVWFFLADDLFVDRVEVATDETIRNLTAMVDVLDLNVAGSPPVFGELAWLDVCQRLRRLLQAEAFERFAQGMRLWATTAALQILNHLRPTSVGMREYQTIRRHTSGMNPCTSLADAANKGSVQACEFYDADVQTLVRQTNNIVCWANDIQSLRIEIHQPGQFRNMVTIYAQQGQSLQDAVETTATRVNKEIASFCELADAVTARPISDELHGLIDGLKYWIRGYLDWVVHDTLRYADQFIESDADDRRF</sequence>
<protein>
    <recommendedName>
        <fullName evidence="3">Sesquiterpene synthase MBR_10393</fullName>
        <ecNumber evidence="2">4.2.3.163</ecNumber>
        <ecNumber evidence="2">4.2.3.171</ecNumber>
    </recommendedName>
    <alternativeName>
        <fullName evidence="3">Bacterial terpene synthase-like protein MBR_10393</fullName>
        <shortName evidence="3">BTPSL</shortName>
    </alternativeName>
</protein>
<proteinExistence type="evidence at protein level"/>
<evidence type="ECO:0000250" key="1">
    <source>
        <dbReference type="UniProtKB" id="B5HDJ6"/>
    </source>
</evidence>
<evidence type="ECO:0000269" key="2">
    <source>
    </source>
</evidence>
<evidence type="ECO:0000303" key="3">
    <source>
    </source>
</evidence>
<evidence type="ECO:0000305" key="4"/>
<accession>A0A0B4FWC3</accession>
<feature type="chain" id="PRO_0000451048" description="Sesquiterpene synthase MBR_10393">
    <location>
        <begin position="1"/>
        <end position="332"/>
    </location>
</feature>
<feature type="short sequence motif" description="DDXXXD motif" evidence="1">
    <location>
        <begin position="91"/>
        <end position="96"/>
    </location>
</feature>
<feature type="binding site" evidence="1">
    <location>
        <position position="91"/>
    </location>
    <ligand>
        <name>Mg(2+)</name>
        <dbReference type="ChEBI" id="CHEBI:18420"/>
        <label>1</label>
    </ligand>
</feature>
<feature type="binding site" evidence="1">
    <location>
        <position position="96"/>
    </location>
    <ligand>
        <name>Mg(2+)</name>
        <dbReference type="ChEBI" id="CHEBI:18420"/>
        <label>1</label>
    </ligand>
</feature>
<feature type="binding site" evidence="1">
    <location>
        <position position="96"/>
    </location>
    <ligand>
        <name>Mg(2+)</name>
        <dbReference type="ChEBI" id="CHEBI:18420"/>
        <label>2</label>
    </ligand>
</feature>
<feature type="binding site" evidence="1">
    <location>
        <position position="184"/>
    </location>
    <ligand>
        <name>substrate</name>
    </ligand>
</feature>
<feature type="binding site" evidence="1">
    <location>
        <position position="230"/>
    </location>
    <ligand>
        <name>Mg(2+)</name>
        <dbReference type="ChEBI" id="CHEBI:18420"/>
        <label>3</label>
    </ligand>
</feature>
<feature type="binding site" evidence="1">
    <location>
        <position position="234"/>
    </location>
    <ligand>
        <name>Mg(2+)</name>
        <dbReference type="ChEBI" id="CHEBI:18420"/>
        <label>3</label>
    </ligand>
</feature>
<feature type="binding site" evidence="1">
    <location>
        <position position="238"/>
    </location>
    <ligand>
        <name>Mg(2+)</name>
        <dbReference type="ChEBI" id="CHEBI:18420"/>
        <label>3</label>
    </ligand>
</feature>
<feature type="site" description="Plays a critical role in the stabilization of intermediate cation" evidence="1">
    <location>
        <position position="88"/>
    </location>
</feature>
<feature type="site" description="Plays a critical role for substrate recognition" evidence="1">
    <location>
        <position position="92"/>
    </location>
</feature>
<organism>
    <name type="scientific">Metarhizium brunneum (strain ARSEF 3297)</name>
    <dbReference type="NCBI Taxonomy" id="1276141"/>
    <lineage>
        <taxon>Eukaryota</taxon>
        <taxon>Fungi</taxon>
        <taxon>Dikarya</taxon>
        <taxon>Ascomycota</taxon>
        <taxon>Pezizomycotina</taxon>
        <taxon>Sordariomycetes</taxon>
        <taxon>Hypocreomycetidae</taxon>
        <taxon>Hypocreales</taxon>
        <taxon>Clavicipitaceae</taxon>
        <taxon>Metarhizium</taxon>
    </lineage>
</organism>
<reference key="1">
    <citation type="journal article" date="2014" name="Proc. Natl. Acad. Sci. U.S.A.">
        <title>Trajectory and genomic determinants of fungal-pathogen speciation and host adaptation.</title>
        <authorList>
            <person name="Hu X."/>
            <person name="Xiao G."/>
            <person name="Zheng P."/>
            <person name="Shang Y."/>
            <person name="Su Y."/>
            <person name="Zhang X."/>
            <person name="Liu X."/>
            <person name="Zhan S."/>
            <person name="St Leger R.J."/>
            <person name="Wang C."/>
        </authorList>
    </citation>
    <scope>NUCLEOTIDE SEQUENCE [LARGE SCALE GENOMIC DNA]</scope>
    <source>
        <strain>ARSEF 3297</strain>
    </source>
</reference>
<reference key="2">
    <citation type="journal article" date="2019" name="Sci. Rep.">
        <title>Terpene synthase genes originated from bacteria through horizontal gene transfer contribute to terpenoid diversity in fungi.</title>
        <authorList>
            <person name="Jia Q."/>
            <person name="Chen X."/>
            <person name="Koellner T.G."/>
            <person name="Rinkel J."/>
            <person name="Fu J."/>
            <person name="Labbe J."/>
            <person name="Xiong W."/>
            <person name="Dickschat J.S."/>
            <person name="Gershenzon J."/>
            <person name="Chen F."/>
        </authorList>
    </citation>
    <scope>FUNCTION</scope>
    <scope>CATALYTIC ACTIVITY</scope>
</reference>
<gene>
    <name type="ORF">MBR_10393</name>
</gene>
<keyword id="KW-0456">Lyase</keyword>
<keyword id="KW-0460">Magnesium</keyword>
<keyword id="KW-0479">Metal-binding</keyword>
<comment type="function">
    <text evidence="2">Terpene synthase that catalyzes the conversion of (2E,6E)-farnesyl diphosphate (FPP) into sesquiterpenes which are important for fungi-environment interactions (PubMed:31239482). Produces a mixture consisting of 8 sesquiterpenes including corvol ethers A and B, as well as traces of epizonarene, gamma-cadinene, delta-cadinene, alpha-cadinene, alpha-cadinol, and an unidentified sesquiterpene (PubMed:31239482). The major product is corvol ether B (PubMed:31239482).</text>
</comment>
<comment type="catalytic activity">
    <reaction evidence="2">
        <text>(2E,6E)-farnesyl diphosphate + H2O = (+)-corvol ether B + diphosphate</text>
        <dbReference type="Rhea" id="RHEA:53644"/>
        <dbReference type="ChEBI" id="CHEBI:15377"/>
        <dbReference type="ChEBI" id="CHEBI:33019"/>
        <dbReference type="ChEBI" id="CHEBI:137536"/>
        <dbReference type="ChEBI" id="CHEBI:175763"/>
        <dbReference type="EC" id="4.2.3.163"/>
    </reaction>
    <physiologicalReaction direction="left-to-right" evidence="2">
        <dbReference type="Rhea" id="RHEA:53645"/>
    </physiologicalReaction>
</comment>
<comment type="catalytic activity">
    <reaction evidence="2">
        <text>(2E,6E)-farnesyl diphosphate + H2O = (+)-corvol ether A + diphosphate</text>
        <dbReference type="Rhea" id="RHEA:53648"/>
        <dbReference type="ChEBI" id="CHEBI:15377"/>
        <dbReference type="ChEBI" id="CHEBI:33019"/>
        <dbReference type="ChEBI" id="CHEBI:137535"/>
        <dbReference type="ChEBI" id="CHEBI:175763"/>
        <dbReference type="EC" id="4.2.3.171"/>
    </reaction>
    <physiologicalReaction direction="left-to-right" evidence="2">
        <dbReference type="Rhea" id="RHEA:53649"/>
    </physiologicalReaction>
</comment>
<comment type="cofactor">
    <cofactor evidence="1">
        <name>Mg(2+)</name>
        <dbReference type="ChEBI" id="CHEBI:18420"/>
    </cofactor>
    <text evidence="1">Binds 3 Mg(2+) ions per subunit.</text>
</comment>
<comment type="domain">
    <text evidence="1">The Asp-Asp-Xaa-Xaa-Xaa-Asp (DDXXXD) motif is important for the catalytic activity, presumably through binding to Mg(2+).</text>
</comment>
<comment type="similarity">
    <text evidence="4">Belongs to the terpene synthase family.</text>
</comment>